<proteinExistence type="evidence at protein level"/>
<evidence type="ECO:0000250" key="1">
    <source>
        <dbReference type="UniProtKB" id="O94649"/>
    </source>
</evidence>
<evidence type="ECO:0000255" key="2"/>
<evidence type="ECO:0000256" key="3">
    <source>
        <dbReference type="SAM" id="MobiDB-lite"/>
    </source>
</evidence>
<evidence type="ECO:0000269" key="4">
    <source>
    </source>
</evidence>
<evidence type="ECO:0000269" key="5">
    <source>
    </source>
</evidence>
<evidence type="ECO:0000269" key="6">
    <source>
    </source>
</evidence>
<evidence type="ECO:0000269" key="7">
    <source>
    </source>
</evidence>
<evidence type="ECO:0000269" key="8">
    <source>
    </source>
</evidence>
<evidence type="ECO:0000269" key="9">
    <source>
    </source>
</evidence>
<evidence type="ECO:0000269" key="10">
    <source>
    </source>
</evidence>
<evidence type="ECO:0000269" key="11">
    <source>
    </source>
</evidence>
<evidence type="ECO:0000269" key="12">
    <source>
    </source>
</evidence>
<evidence type="ECO:0000269" key="13">
    <source>
    </source>
</evidence>
<evidence type="ECO:0000269" key="14">
    <source>
    </source>
</evidence>
<evidence type="ECO:0000269" key="15">
    <source>
    </source>
</evidence>
<evidence type="ECO:0000269" key="16">
    <source>
    </source>
</evidence>
<evidence type="ECO:0000269" key="17">
    <source>
    </source>
</evidence>
<evidence type="ECO:0000269" key="18">
    <source>
    </source>
</evidence>
<evidence type="ECO:0000269" key="19">
    <source>
    </source>
</evidence>
<evidence type="ECO:0000269" key="20">
    <source>
    </source>
</evidence>
<evidence type="ECO:0000269" key="21">
    <source>
    </source>
</evidence>
<evidence type="ECO:0000269" key="22">
    <source>
    </source>
</evidence>
<evidence type="ECO:0000269" key="23">
    <source>
    </source>
</evidence>
<evidence type="ECO:0000269" key="24">
    <source>
    </source>
</evidence>
<evidence type="ECO:0000269" key="25">
    <source>
    </source>
</evidence>
<evidence type="ECO:0000269" key="26">
    <source>
    </source>
</evidence>
<evidence type="ECO:0000269" key="27">
    <source>
    </source>
</evidence>
<evidence type="ECO:0000269" key="28">
    <source>
    </source>
</evidence>
<evidence type="ECO:0000305" key="29"/>
<evidence type="ECO:0000305" key="30">
    <source>
    </source>
</evidence>
<evidence type="ECO:0007744" key="31">
    <source>
    </source>
</evidence>
<keyword id="KW-0072">Autophagy</keyword>
<keyword id="KW-0175">Coiled coil</keyword>
<keyword id="KW-0256">Endoplasmic reticulum</keyword>
<keyword id="KW-0445">Lipid transport</keyword>
<keyword id="KW-0472">Membrane</keyword>
<keyword id="KW-0597">Phosphoprotein</keyword>
<keyword id="KW-0653">Protein transport</keyword>
<keyword id="KW-1185">Reference proteome</keyword>
<keyword id="KW-0813">Transport</keyword>
<gene>
    <name type="primary">ATG2</name>
    <name type="synonym">APG2</name>
    <name type="synonym">AUT8</name>
    <name type="synonym">SPO72</name>
    <name type="ordered locus">YNL242W</name>
    <name type="ORF">N1106</name>
</gene>
<dbReference type="EMBL" id="Z69381">
    <property type="protein sequence ID" value="CAA93356.1"/>
    <property type="molecule type" value="Genomic_DNA"/>
</dbReference>
<dbReference type="EMBL" id="Z71518">
    <property type="protein sequence ID" value="CAA96147.1"/>
    <property type="molecule type" value="Genomic_DNA"/>
</dbReference>
<dbReference type="EMBL" id="BK006947">
    <property type="protein sequence ID" value="DAA10317.1"/>
    <property type="molecule type" value="Genomic_DNA"/>
</dbReference>
<dbReference type="PIR" id="S63208">
    <property type="entry name" value="S63208"/>
</dbReference>
<dbReference type="RefSeq" id="NP_014157.1">
    <property type="nucleotide sequence ID" value="NM_001183080.1"/>
</dbReference>
<dbReference type="BioGRID" id="35597">
    <property type="interactions" value="197"/>
</dbReference>
<dbReference type="ComplexPortal" id="CPX-361">
    <property type="entry name" value="ATG2-ATG18 complex"/>
</dbReference>
<dbReference type="DIP" id="DIP-2620N"/>
<dbReference type="FunCoup" id="P53855">
    <property type="interactions" value="68"/>
</dbReference>
<dbReference type="IntAct" id="P53855">
    <property type="interactions" value="5"/>
</dbReference>
<dbReference type="MINT" id="P53855"/>
<dbReference type="STRING" id="4932.YNL242W"/>
<dbReference type="TCDB" id="9.A.15.1.1">
    <property type="family name" value="the autophagy-related phagophore-formation transporter (apt) family"/>
</dbReference>
<dbReference type="iPTMnet" id="P53855"/>
<dbReference type="PaxDb" id="4932-YNL242W"/>
<dbReference type="PeptideAtlas" id="P53855"/>
<dbReference type="EnsemblFungi" id="YNL242W_mRNA">
    <property type="protein sequence ID" value="YNL242W"/>
    <property type="gene ID" value="YNL242W"/>
</dbReference>
<dbReference type="GeneID" id="855479"/>
<dbReference type="KEGG" id="sce:YNL242W"/>
<dbReference type="AGR" id="SGD:S000005186"/>
<dbReference type="SGD" id="S000005186">
    <property type="gene designation" value="ATG2"/>
</dbReference>
<dbReference type="VEuPathDB" id="FungiDB:YNL242W"/>
<dbReference type="eggNOG" id="KOG2993">
    <property type="taxonomic scope" value="Eukaryota"/>
</dbReference>
<dbReference type="GeneTree" id="ENSGT00620000087966"/>
<dbReference type="HOGENOM" id="CLU_000626_3_0_1"/>
<dbReference type="InParanoid" id="P53855"/>
<dbReference type="OMA" id="YDWKYTR"/>
<dbReference type="OrthoDB" id="18982at2759"/>
<dbReference type="BioCyc" id="YEAST:G3O-33239-MONOMER"/>
<dbReference type="BioGRID-ORCS" id="855479">
    <property type="hits" value="1 hit in 10 CRISPR screens"/>
</dbReference>
<dbReference type="PRO" id="PR:P53855"/>
<dbReference type="Proteomes" id="UP000002311">
    <property type="component" value="Chromosome XIV"/>
</dbReference>
<dbReference type="RNAct" id="P53855">
    <property type="molecule type" value="protein"/>
</dbReference>
<dbReference type="GO" id="GO:0005737">
    <property type="term" value="C:cytoplasm"/>
    <property type="evidence" value="ECO:0000314"/>
    <property type="project" value="SGD"/>
</dbReference>
<dbReference type="GO" id="GO:0005829">
    <property type="term" value="C:cytosol"/>
    <property type="evidence" value="ECO:0007005"/>
    <property type="project" value="SGD"/>
</dbReference>
<dbReference type="GO" id="GO:0005789">
    <property type="term" value="C:endoplasmic reticulum membrane"/>
    <property type="evidence" value="ECO:0007669"/>
    <property type="project" value="UniProtKB-SubCell"/>
</dbReference>
<dbReference type="GO" id="GO:0097632">
    <property type="term" value="C:extrinsic component of phagophore assembly site membrane"/>
    <property type="evidence" value="ECO:0000314"/>
    <property type="project" value="UniProtKB"/>
</dbReference>
<dbReference type="GO" id="GO:0061908">
    <property type="term" value="C:phagophore"/>
    <property type="evidence" value="ECO:0000314"/>
    <property type="project" value="SGD"/>
</dbReference>
<dbReference type="GO" id="GO:0000407">
    <property type="term" value="C:phagophore assembly site"/>
    <property type="evidence" value="ECO:0000314"/>
    <property type="project" value="SGD"/>
</dbReference>
<dbReference type="GO" id="GO:0034045">
    <property type="term" value="C:phagophore assembly site membrane"/>
    <property type="evidence" value="ECO:0000314"/>
    <property type="project" value="ComplexPortal"/>
</dbReference>
<dbReference type="GO" id="GO:0032991">
    <property type="term" value="C:protein-containing complex"/>
    <property type="evidence" value="ECO:0000314"/>
    <property type="project" value="ComplexPortal"/>
</dbReference>
<dbReference type="GO" id="GO:0120013">
    <property type="term" value="F:lipid transfer activity"/>
    <property type="evidence" value="ECO:0000314"/>
    <property type="project" value="UniProtKB"/>
</dbReference>
<dbReference type="GO" id="GO:0032266">
    <property type="term" value="F:phosphatidylinositol-3-phosphate binding"/>
    <property type="evidence" value="ECO:0000314"/>
    <property type="project" value="SGD"/>
</dbReference>
<dbReference type="GO" id="GO:0043495">
    <property type="term" value="F:protein-membrane adaptor activity"/>
    <property type="evidence" value="ECO:0000318"/>
    <property type="project" value="GO_Central"/>
</dbReference>
<dbReference type="GO" id="GO:0000045">
    <property type="term" value="P:autophagosome assembly"/>
    <property type="evidence" value="ECO:0000315"/>
    <property type="project" value="SGD"/>
</dbReference>
<dbReference type="GO" id="GO:0006914">
    <property type="term" value="P:autophagy"/>
    <property type="evidence" value="ECO:0000315"/>
    <property type="project" value="UniProtKB"/>
</dbReference>
<dbReference type="GO" id="GO:0000422">
    <property type="term" value="P:autophagy of mitochondrion"/>
    <property type="evidence" value="ECO:0000315"/>
    <property type="project" value="SGD"/>
</dbReference>
<dbReference type="GO" id="GO:0032258">
    <property type="term" value="P:cytoplasm to vacuole targeting by the Cvt pathway"/>
    <property type="evidence" value="ECO:0000315"/>
    <property type="project" value="SGD"/>
</dbReference>
<dbReference type="GO" id="GO:0061723">
    <property type="term" value="P:glycophagy"/>
    <property type="evidence" value="ECO:0000318"/>
    <property type="project" value="GO_Central"/>
</dbReference>
<dbReference type="GO" id="GO:0016236">
    <property type="term" value="P:macroautophagy"/>
    <property type="evidence" value="ECO:0000314"/>
    <property type="project" value="ComplexPortal"/>
</dbReference>
<dbReference type="GO" id="GO:0044804">
    <property type="term" value="P:nucleophagy"/>
    <property type="evidence" value="ECO:0000315"/>
    <property type="project" value="SGD"/>
</dbReference>
<dbReference type="GO" id="GO:0000425">
    <property type="term" value="P:pexophagy"/>
    <property type="evidence" value="ECO:0000314"/>
    <property type="project" value="SGD"/>
</dbReference>
<dbReference type="GO" id="GO:0034727">
    <property type="term" value="P:piecemeal microautophagy of the nucleus"/>
    <property type="evidence" value="ECO:0000315"/>
    <property type="project" value="SGD"/>
</dbReference>
<dbReference type="GO" id="GO:0061709">
    <property type="term" value="P:reticulophagy"/>
    <property type="evidence" value="ECO:0000315"/>
    <property type="project" value="SGD"/>
</dbReference>
<dbReference type="InterPro" id="IPR026849">
    <property type="entry name" value="ATG2"/>
</dbReference>
<dbReference type="PANTHER" id="PTHR13190">
    <property type="entry name" value="AUTOPHAGY-RELATED 2, ISOFORM A"/>
    <property type="match status" value="1"/>
</dbReference>
<dbReference type="PANTHER" id="PTHR13190:SF1">
    <property type="entry name" value="AUTOPHAGY-RELATED 2, ISOFORM A"/>
    <property type="match status" value="1"/>
</dbReference>
<dbReference type="Pfam" id="PF13329">
    <property type="entry name" value="ATG2_CAD"/>
    <property type="match status" value="1"/>
</dbReference>
<sequence length="1592" mass="178414">MAFWLPQNIQKRLLLYVLQQISLFSNIDLSNLDVSIGSKSHFSFHDVNLSLDDLNIPNVQINEGIVDELVLKLTVSGGVEIDGSGLRFIMTPLYSSGSQELHSDFLVKSIQDLTNSMLQFSDPLTTYNRYKEDDISSSDSSSDLNSNIEASKPAANGSYTLQNMRNKALNVALAKLKIALKDVTIRFIVNDRDPSDNIVEVHLESIQLITTDANLRHINIENITISSIQKQAVPDSPVHPFNNDDLSQSVYLSKMEATSLYMSAMEEQSNEDPSEPQVTQEEQENDKCKESLMEINNLNIAFKGLSSVNDLRMSNIVIDIQDVHLAIHKIVEIKNSTLKNIIDIIVTHLDANESFSCQDSQSPSPDKQEPSALSSVDIKCIYLNLGQDITVILKSFKLEQKENNSLAFSLGSFYSNSSPLTISHKTKPLLTGEQTPQSIALNMGDELDIIISHDGIAHFFKIFQFVSKCMSFYQNKSKGMMPQIASDTKRTVQLTSKAVKLSLKFPYFLLCFQVSPFIYDSNRELYIELVDVFKKLPSRCTKILTMSSITISNLQSPLQLGSYDDTLKEALIYSSVHAIIKEVIFNEEYSGIVQLVEDISAFGKLFTDSKNSECTGKSKSKRGSFLQRSVRVLNSSRFVYKQSLSANFSLKIDSMKLKVSEIIGPQFGSVEALLSNNFFAITDDSQIVYFTKNLKVERKTPSLLEPQEIMSVVLNKAVNEPVLYVHRRANGKLKVIFNNIRIHYYARWLEILKKNIGPDNASSKDEPVSQKLSKKQPTSGFPWELKCLDCSLILHPFRLKSVMVIVLDNLTTGGSSFIPQAKLLSKANTLFLIDDYQNFKIQKDKNWPSLINFYAGQGFSAIGKIDTLNFLINKSDGALLLDCKIEQVGLSLCADSFQTFCQLCIDLKYPQTFPDEEKFRTQLKNPIDVFKDIDCDLFNSAFIRENNHQNDYDSVHLVDSFLDKTHEFNNGARSKLSSQGSYEMDSSSGTATGGILLPHESYLDSAQPKEEDTPPIASKEQERDVDIRGSIDVEKVVIKLFDGYDWKYTRKFIANTVEKLDKELSKAEASSSKSNVPQSEANIFDSIYISANKNNVTDLRRNLDGEIQGVQNSFSDVSKVNLRPSKHYKALIQLNKVHVNLKNYRVDEPDESNSDNSTDVLNRCVVSIYEFEIIDNVPTSTWNKFVTLLKHEPWPHSSPMFLLDLEFIRPIDFLQAVELVMQLNVAPLRLHVDQDTLEFLIRFLGFKDKRFELIDEYPDIVFIQKFSTNSIKLRLDYKPKKVDYAGLRSGQTSELMNFFTLDGSKIILKSVVLYGLNGFDELNNKLKAIWTPDITKKQLPGVLEGLAPVRSFMAIGSGVKTLVTVLMSEYRQEGHLGRSLKKGGNVFLKTTTGDFVKLGVKLTSGTQAILENTEELFGGVGSNGRVYDASKFGSADGADSDTAAVLDLDTLFEEDQLVGSKYSRIRDHEPTAVVIDMSSPGDHNEPTIVSLYADQPLDLPTGLKEAYSSLEKHMHIAYDAVWRAKGQMKDDKRGGPSAAAVYVARAAPVAIIRPLIGATEAVSKTLQGIANQVDKTHNEQINDKYKSNRTDS</sequence>
<reference key="1">
    <citation type="journal article" date="1996" name="Yeast">
        <title>The DNA sequence of cosmid 14-5 from chromosome XIV reveals 21 open reading frames including a novel gene encoding a globin-like domain.</title>
        <authorList>
            <person name="Pandolfo D."/>
            <person name="de Antoni A."/>
            <person name="Lanfranchi G."/>
            <person name="Valle G."/>
        </authorList>
    </citation>
    <scope>NUCLEOTIDE SEQUENCE [GENOMIC DNA]</scope>
</reference>
<reference key="2">
    <citation type="journal article" date="1997" name="Nature">
        <title>The nucleotide sequence of Saccharomyces cerevisiae chromosome XIV and its evolutionary implications.</title>
        <authorList>
            <person name="Philippsen P."/>
            <person name="Kleine K."/>
            <person name="Poehlmann R."/>
            <person name="Duesterhoeft A."/>
            <person name="Hamberg K."/>
            <person name="Hegemann J.H."/>
            <person name="Obermaier B."/>
            <person name="Urrestarazu L.A."/>
            <person name="Aert R."/>
            <person name="Albermann K."/>
            <person name="Altmann R."/>
            <person name="Andre B."/>
            <person name="Baladron V."/>
            <person name="Ballesta J.P.G."/>
            <person name="Becam A.-M."/>
            <person name="Beinhauer J.D."/>
            <person name="Boskovic J."/>
            <person name="Buitrago M.J."/>
            <person name="Bussereau F."/>
            <person name="Coster F."/>
            <person name="Crouzet M."/>
            <person name="D'Angelo M."/>
            <person name="Dal Pero F."/>
            <person name="De Antoni A."/>
            <person name="del Rey F."/>
            <person name="Doignon F."/>
            <person name="Domdey H."/>
            <person name="Dubois E."/>
            <person name="Fiedler T.A."/>
            <person name="Fleig U."/>
            <person name="Floeth M."/>
            <person name="Fritz C."/>
            <person name="Gaillardin C."/>
            <person name="Garcia-Cantalejo J.M."/>
            <person name="Glansdorff N."/>
            <person name="Goffeau A."/>
            <person name="Gueldener U."/>
            <person name="Herbert C.J."/>
            <person name="Heumann K."/>
            <person name="Heuss-Neitzel D."/>
            <person name="Hilbert H."/>
            <person name="Hinni K."/>
            <person name="Iraqui Houssaini I."/>
            <person name="Jacquet M."/>
            <person name="Jimenez A."/>
            <person name="Jonniaux J.-L."/>
            <person name="Karpfinger-Hartl L."/>
            <person name="Lanfranchi G."/>
            <person name="Lepingle A."/>
            <person name="Levesque H."/>
            <person name="Lyck R."/>
            <person name="Maftahi M."/>
            <person name="Mallet L."/>
            <person name="Maurer C.T.C."/>
            <person name="Messenguy F."/>
            <person name="Mewes H.-W."/>
            <person name="Moestl D."/>
            <person name="Nasr F."/>
            <person name="Nicaud J.-M."/>
            <person name="Niedenthal R.K."/>
            <person name="Pandolfo D."/>
            <person name="Pierard A."/>
            <person name="Piravandi E."/>
            <person name="Planta R.J."/>
            <person name="Pohl T.M."/>
            <person name="Purnelle B."/>
            <person name="Rebischung C."/>
            <person name="Remacha M.A."/>
            <person name="Revuelta J.L."/>
            <person name="Rinke M."/>
            <person name="Saiz J.E."/>
            <person name="Sartorello F."/>
            <person name="Scherens B."/>
            <person name="Sen-Gupta M."/>
            <person name="Soler-Mira A."/>
            <person name="Urbanus J.H.M."/>
            <person name="Valle G."/>
            <person name="Van Dyck L."/>
            <person name="Verhasselt P."/>
            <person name="Vierendeels F."/>
            <person name="Vissers S."/>
            <person name="Voet M."/>
            <person name="Volckaert G."/>
            <person name="Wach A."/>
            <person name="Wambutt R."/>
            <person name="Wedler H."/>
            <person name="Zollner A."/>
            <person name="Hani J."/>
        </authorList>
    </citation>
    <scope>NUCLEOTIDE SEQUENCE [LARGE SCALE GENOMIC DNA]</scope>
    <source>
        <strain>ATCC 204508 / S288c</strain>
    </source>
</reference>
<reference key="3">
    <citation type="journal article" date="2014" name="G3 (Bethesda)">
        <title>The reference genome sequence of Saccharomyces cerevisiae: Then and now.</title>
        <authorList>
            <person name="Engel S.R."/>
            <person name="Dietrich F.S."/>
            <person name="Fisk D.G."/>
            <person name="Binkley G."/>
            <person name="Balakrishnan R."/>
            <person name="Costanzo M.C."/>
            <person name="Dwight S.S."/>
            <person name="Hitz B.C."/>
            <person name="Karra K."/>
            <person name="Nash R.S."/>
            <person name="Weng S."/>
            <person name="Wong E.D."/>
            <person name="Lloyd P."/>
            <person name="Skrzypek M.S."/>
            <person name="Miyasato S.R."/>
            <person name="Simison M."/>
            <person name="Cherry J.M."/>
        </authorList>
    </citation>
    <scope>GENOME REANNOTATION</scope>
    <source>
        <strain>ATCC 204508 / S288c</strain>
    </source>
</reference>
<reference key="4">
    <citation type="journal article" date="1993" name="FEBS Lett.">
        <title>Isolation and characterization of autophagy-defective mutants of Saccharomyces cerevisiae.</title>
        <authorList>
            <person name="Tsukada M."/>
            <person name="Ohsumi Y."/>
        </authorList>
    </citation>
    <scope>FUNCTION</scope>
</reference>
<reference key="5">
    <citation type="journal article" date="1999" name="Yeast">
        <title>Disruption of six unknown open reading frames from Saccharomyces cerevisiae reveals two genes involved in vacuolar morphogenesis and one gene required for sporulation.</title>
        <authorList>
            <person name="Saiz J.E."/>
            <person name="de Los Angeles Santos M."/>
            <person name="Vazquez de Aldana C.R."/>
            <person name="Revuelta J.L."/>
        </authorList>
    </citation>
    <scope>FUNCTION</scope>
</reference>
<reference key="6">
    <citation type="journal article" date="2001" name="Gene">
        <title>A genomic screen identifies AUT8 as a novel gene essential for autophagy in the yeast Saccharomyces cerevisiae.</title>
        <authorList>
            <person name="Barth H."/>
            <person name="Thumm M."/>
        </authorList>
    </citation>
    <scope>FUNCTION</scope>
</reference>
<reference key="7">
    <citation type="journal article" date="2001" name="J. Biol. Chem.">
        <title>Apg2 is a novel protein required for the cytoplasm to vacuole targeting, autophagy, and pexophagy pathways.</title>
        <authorList>
            <person name="Wang C.-W."/>
            <person name="Kim J."/>
            <person name="Huang W.-P."/>
            <person name="Abeliovich H."/>
            <person name="Stromhaug P.E."/>
            <person name="Dunn W.A. Jr."/>
            <person name="Klionsky D.J."/>
        </authorList>
    </citation>
    <scope>FUNCTION</scope>
</reference>
<reference key="8">
    <citation type="journal article" date="2001" name="J. Biol. Chem.">
        <title>Apg2p functions in autophagosome formation on the perivacuolar structure.</title>
        <authorList>
            <person name="Shintani T."/>
            <person name="Suzuki K."/>
            <person name="Kamada Y."/>
            <person name="Noda T."/>
            <person name="Ohsumi Y."/>
        </authorList>
    </citation>
    <scope>FUNCTION</scope>
    <scope>SUBCELLULAR LOCATION</scope>
    <scope>MUTAGENESIS OF GLY-83</scope>
</reference>
<reference key="9">
    <citation type="journal article" date="2003" name="Dev. Cell">
        <title>A unified nomenclature for yeast autophagy-related genes.</title>
        <authorList>
            <person name="Klionsky D.J."/>
            <person name="Cregg J.M."/>
            <person name="Dunn W.A. Jr."/>
            <person name="Emr S.D."/>
            <person name="Sakai Y."/>
            <person name="Sandoval I.V."/>
            <person name="Sibirny A."/>
            <person name="Subramani S."/>
            <person name="Thumm M."/>
            <person name="Veenhuis M."/>
            <person name="Ohsumi Y."/>
        </authorList>
    </citation>
    <scope>NOMENCLATURE</scope>
</reference>
<reference key="10">
    <citation type="journal article" date="2003" name="Nature">
        <title>Global analysis of protein expression in yeast.</title>
        <authorList>
            <person name="Ghaemmaghami S."/>
            <person name="Huh W.-K."/>
            <person name="Bower K."/>
            <person name="Howson R.W."/>
            <person name="Belle A."/>
            <person name="Dephoure N."/>
            <person name="O'Shea E.K."/>
            <person name="Weissman J.S."/>
        </authorList>
    </citation>
    <scope>LEVEL OF PROTEIN EXPRESSION [LARGE SCALE ANALYSIS]</scope>
</reference>
<reference key="11">
    <citation type="journal article" date="2004" name="Dev. Cell">
        <title>The Atg1-Atg13 complex regulates Atg9 and Atg23 retrieval transport from the pre-autophagosomal structure.</title>
        <authorList>
            <person name="Reggiori F."/>
            <person name="Tucker K.A."/>
            <person name="Stromhaug P.E."/>
            <person name="Klionsky D.J."/>
        </authorList>
    </citation>
    <scope>FUNCTION</scope>
    <scope>SUBCELLULAR LOCATION</scope>
</reference>
<reference key="12">
    <citation type="journal article" date="2007" name="Genes Cells">
        <title>Hierarchy of Atg proteins in pre-autophagosomal structure organization.</title>
        <authorList>
            <person name="Suzuki K."/>
            <person name="Kubota Y."/>
            <person name="Sekito T."/>
            <person name="Ohsumi Y."/>
        </authorList>
    </citation>
    <scope>FUNCTION</scope>
    <scope>SUBCELLULAR LOCATION</scope>
    <scope>INTERACTION WITH ATG18</scope>
</reference>
<reference key="13">
    <citation type="journal article" date="2008" name="J. Biol. Chem.">
        <title>The Atg18-Atg2 complex is recruited to autophagic membranes via phosphatidylinositol 3-phosphate and exerts an essential function.</title>
        <authorList>
            <person name="Obara K."/>
            <person name="Sekito T."/>
            <person name="Niimi K."/>
            <person name="Ohsumi Y."/>
        </authorList>
    </citation>
    <scope>FUNCTION</scope>
    <scope>INTERACTION WITH ATG18</scope>
    <scope>SUBCELLULAR LOCATION</scope>
</reference>
<reference key="14">
    <citation type="journal article" date="2008" name="J. Cell Biol.">
        <title>Quantitative analysis of autophagy-related protein stoichiometry by fluorescence microscopy.</title>
        <authorList>
            <person name="Geng J."/>
            <person name="Baba M."/>
            <person name="Nair U."/>
            <person name="Klionsky D.J."/>
        </authorList>
    </citation>
    <scope>FUNCTION</scope>
</reference>
<reference key="15">
    <citation type="journal article" date="2008" name="Mol. Biol. Cell">
        <title>Self-interaction is critical for Atg9 transport and function at the phagophore assembly site during autophagy.</title>
        <authorList>
            <person name="He C."/>
            <person name="Baba M."/>
            <person name="Cao Y."/>
            <person name="Klionsky D.J."/>
        </authorList>
    </citation>
    <scope>SUBCELLULAR LOCATION</scope>
</reference>
<reference key="16">
    <citation type="journal article" date="2008" name="Mol. Cell. Proteomics">
        <title>A multidimensional chromatography technology for in-depth phosphoproteome analysis.</title>
        <authorList>
            <person name="Albuquerque C.P."/>
            <person name="Smolka M.B."/>
            <person name="Payne S.H."/>
            <person name="Bafna V."/>
            <person name="Eng J."/>
            <person name="Zhou H."/>
        </authorList>
    </citation>
    <scope>IDENTIFICATION BY MASS SPECTROMETRY [LARGE SCALE ANALYSIS]</scope>
</reference>
<reference key="17">
    <citation type="journal article" date="2009" name="Genes Cells">
        <title>Atg17 recruits Atg9 to organize the pre-autophagosomal structure.</title>
        <authorList>
            <person name="Sekito T."/>
            <person name="Kawamata T."/>
            <person name="Ichikawa R."/>
            <person name="Suzuki K."/>
            <person name="Ohsumi Y."/>
        </authorList>
    </citation>
    <scope>FUNCTION</scope>
</reference>
<reference key="18">
    <citation type="journal article" date="2009" name="Science">
        <title>Global analysis of Cdk1 substrate phosphorylation sites provides insights into evolution.</title>
        <authorList>
            <person name="Holt L.J."/>
            <person name="Tuch B.B."/>
            <person name="Villen J."/>
            <person name="Johnson A.D."/>
            <person name="Gygi S.P."/>
            <person name="Morgan D.O."/>
        </authorList>
    </citation>
    <scope>PHOSPHORYLATION [LARGE SCALE ANALYSIS] AT SER-236</scope>
    <scope>IDENTIFICATION BY MASS SPECTROMETRY [LARGE SCALE ANALYSIS]</scope>
</reference>
<reference key="19">
    <citation type="journal article" date="2010" name="Mol. Biol. Cell">
        <title>Exit from the Golgi is required for the expansion of the autophagosomal phagophore in yeast Saccharomyces cerevisiae.</title>
        <authorList>
            <person name="van der Vaart A."/>
            <person name="Griffith J."/>
            <person name="Reggiori F."/>
        </authorList>
    </citation>
    <scope>SUBCELLULAR LOCATION</scope>
</reference>
<reference key="20">
    <citation type="journal article" date="2010" name="Mol. Cell. Biol.">
        <title>Tor directly controls the Atg1 kinase complex to regulate autophagy.</title>
        <authorList>
            <person name="Kamada Y."/>
            <person name="Yoshino K."/>
            <person name="Kondo C."/>
            <person name="Kawamata T."/>
            <person name="Oshiro N."/>
            <person name="Yonezawa K."/>
            <person name="Ohsumi Y."/>
        </authorList>
    </citation>
    <scope>FUNCTION</scope>
</reference>
<reference key="21">
    <citation type="journal article" date="2012" name="FEBS Lett.">
        <title>Autophagosome formation can be achieved in the absence of Atg18 by expressing engineered PAS-targeted Atg2.</title>
        <authorList>
            <person name="Kobayashi T."/>
            <person name="Suzuki K."/>
            <person name="Ohsumi Y."/>
        </authorList>
    </citation>
    <scope>FUNCTION</scope>
    <scope>SUBCELLULAR LOCATION</scope>
</reference>
<reference key="22">
    <citation type="journal article" date="2012" name="J. Biol. Chem.">
        <title>Structure-based analyses reveal distinct binding sites for Atg2 and phosphoinositides in Atg18.</title>
        <authorList>
            <person name="Watanabe Y."/>
            <person name="Kobayashi T."/>
            <person name="Yamamoto H."/>
            <person name="Hoshida H."/>
            <person name="Akada R."/>
            <person name="Inagaki F."/>
            <person name="Ohsumi Y."/>
            <person name="Noda N.N."/>
        </authorList>
    </citation>
    <scope>INTERACTION WITH ATG18</scope>
</reference>
<reference key="23">
    <citation type="journal article" date="2013" name="Exp. Gerontol.">
        <title>Autophagy and leucine promote chronological longevity and respiration proficiency during calorie restriction in yeast.</title>
        <authorList>
            <person name="Aris J.P."/>
            <person name="Alvers A.L."/>
            <person name="Ferraiuolo R.A."/>
            <person name="Fishwick L.K."/>
            <person name="Hanvivatpong A."/>
            <person name="Hu D."/>
            <person name="Kirlew C."/>
            <person name="Leonard M.T."/>
            <person name="Losin K.J."/>
            <person name="Marraffini M."/>
            <person name="Seo A.Y."/>
            <person name="Swanberg V."/>
            <person name="Westcott J.L."/>
            <person name="Wood M.S."/>
            <person name="Leeuwenburgh C."/>
            <person name="Dunn W.A. Jr."/>
        </authorList>
    </citation>
    <scope>FUNCTION</scope>
</reference>
<reference key="24">
    <citation type="journal article" date="2013" name="J. Cell Sci.">
        <title>Atg18 function in autophagy is regulated by specific sites within its beta-propeller.</title>
        <authorList>
            <person name="Rieter E."/>
            <person name="Vinke F."/>
            <person name="Bakula D."/>
            <person name="Cebollero E."/>
            <person name="Ungermann C."/>
            <person name="Proikas-Cezanne T."/>
            <person name="Reggiori F."/>
        </authorList>
    </citation>
    <scope>INTERACTION WITH ATG18</scope>
    <scope>FUNCTION</scope>
</reference>
<reference key="25">
    <citation type="journal article" date="2013" name="J. Cell Sci.">
        <title>Fine mapping of autophagy-related proteins during autophagosome formation in Saccharomyces cerevisiae.</title>
        <authorList>
            <person name="Suzuki K."/>
            <person name="Akioka M."/>
            <person name="Kondo-Kakuta C."/>
            <person name="Yamamoto H."/>
            <person name="Ohsumi Y."/>
        </authorList>
    </citation>
    <scope>SUBCELLULAR LOCATION</scope>
</reference>
<reference key="26">
    <citation type="journal article" date="2013" name="Mol. Biol. Cell">
        <title>ER exit sites are physical and functional core autophagosome biogenesis components.</title>
        <authorList>
            <person name="Graef M."/>
            <person name="Friedman J.R."/>
            <person name="Graham C."/>
            <person name="Babu M."/>
            <person name="Nunnari J."/>
        </authorList>
    </citation>
    <scope>SUBCELLULAR LOCATION</scope>
</reference>
<reference key="27">
    <citation type="journal article" date="2014" name="Mol. Cell">
        <title>Early steps in autophagy depend on direct phosphorylation of Atg9 by the Atg1 kinase.</title>
        <authorList>
            <person name="Papinski D."/>
            <person name="Schuschnig M."/>
            <person name="Reiter W."/>
            <person name="Wilhelm L."/>
            <person name="Barnes C.A."/>
            <person name="Maiolica A."/>
            <person name="Hansmann I."/>
            <person name="Pfaffenwimmer T."/>
            <person name="Kijanska M."/>
            <person name="Stoffel I."/>
            <person name="Lee S.S."/>
            <person name="Brezovich A."/>
            <person name="Lou J.H."/>
            <person name="Turk B.E."/>
            <person name="Aebersold R."/>
            <person name="Ammerer G."/>
            <person name="Peter M."/>
            <person name="Kraft C."/>
        </authorList>
    </citation>
    <scope>PHOSPHORYLATION AT SER-249 AND SER-1086</scope>
    <scope>MUTAGENESIS OF SER-249 AND SER-1086</scope>
</reference>
<reference key="28">
    <citation type="journal article" date="2017" name="PLoS ONE">
        <title>Atg4 plays an important role in efficient expansion of autophagic isolation membranes by cleaving lipidated Atg8 in Saccharomyces cerevisiae.</title>
        <authorList>
            <person name="Hirata E."/>
            <person name="Ohya Y."/>
            <person name="Suzuki K."/>
        </authorList>
    </citation>
    <scope>FUNCTION</scope>
    <scope>DISRUPTION PHENOTYPE</scope>
</reference>
<reference key="29">
    <citation type="journal article" date="2018" name="J. Cell Biol.">
        <title>Atg9 establishes Atg2-dependent contact sites between the endoplasmic reticulum and phagophores.</title>
        <authorList>
            <person name="Gomez-Sanchez R."/>
            <person name="Rose J."/>
            <person name="Guimaraes R."/>
            <person name="Mari M."/>
            <person name="Papinski D."/>
            <person name="Rieter E."/>
            <person name="Geerts W.J."/>
            <person name="Hardenberg R."/>
            <person name="Kraft C."/>
            <person name="Ungermann C."/>
            <person name="Reggiori F."/>
        </authorList>
    </citation>
    <scope>INTERACTION WITH ATG9</scope>
    <scope>SUBCELLULAR LOCATION</scope>
    <scope>FUNCTION</scope>
</reference>
<reference key="30">
    <citation type="journal article" date="2018" name="Proc. Natl. Acad. Sci. U.S.A.">
        <title>The Atg2-Atg18 complex tethers pre-autophagosomal membranes to the endoplasmic reticulum for autophagosome formation.</title>
        <authorList>
            <person name="Kotani T."/>
            <person name="Kirisako H."/>
            <person name="Koizumi M."/>
            <person name="Ohsumi Y."/>
            <person name="Nakatogawa H."/>
        </authorList>
    </citation>
    <scope>FUNCTION</scope>
    <scope>SUBCELLULAR LOCATION</scope>
    <scope>INTERACTION WITH ATG18</scope>
    <scope>DOMAIN</scope>
    <scope>MUTAGENESIS OF 1352-PHE--ILE-1355</scope>
</reference>
<reference key="31">
    <citation type="journal article" date="2020" name="Science">
        <title>Reconstitution of autophagosome nucleation defines Atg9 vesicles as seeds for membrane formation.</title>
        <authorList>
            <person name="Sawa-Makarska J."/>
            <person name="Baumann V."/>
            <person name="Coudevylle N."/>
            <person name="von Buelow S."/>
            <person name="Nogellova V."/>
            <person name="Abert C."/>
            <person name="Schuschnig M."/>
            <person name="Graef M."/>
            <person name="Hummer G."/>
            <person name="Martens S."/>
        </authorList>
    </citation>
    <scope>FUNCTION</scope>
</reference>
<reference key="32">
    <citation type="journal article" date="2021" name="Cell. Mol. Life Sci.">
        <title>The crystal structure of Atg18 reveals a new binding site for Atg2 in Saccharomyces cerevisiae.</title>
        <authorList>
            <person name="Lei Y."/>
            <person name="Tang D."/>
            <person name="Liao G."/>
            <person name="Xu L."/>
            <person name="Liu S."/>
            <person name="Chen Q."/>
            <person name="Li C."/>
            <person name="Duan J."/>
            <person name="Wang K."/>
            <person name="Wang J."/>
            <person name="Sun B."/>
            <person name="Li Z."/>
            <person name="Dai L."/>
            <person name="Cheng W."/>
            <person name="Qi S."/>
            <person name="Lu K."/>
        </authorList>
    </citation>
    <scope>INTERACTION WITH ATG18</scope>
</reference>
<organism>
    <name type="scientific">Saccharomyces cerevisiae (strain ATCC 204508 / S288c)</name>
    <name type="common">Baker's yeast</name>
    <dbReference type="NCBI Taxonomy" id="559292"/>
    <lineage>
        <taxon>Eukaryota</taxon>
        <taxon>Fungi</taxon>
        <taxon>Dikarya</taxon>
        <taxon>Ascomycota</taxon>
        <taxon>Saccharomycotina</taxon>
        <taxon>Saccharomycetes</taxon>
        <taxon>Saccharomycetales</taxon>
        <taxon>Saccharomycetaceae</taxon>
        <taxon>Saccharomyces</taxon>
    </lineage>
</organism>
<accession>P53855</accession>
<accession>D6W0V1</accession>
<protein>
    <recommendedName>
        <fullName>Autophagy-related protein 2</fullName>
    </recommendedName>
    <alternativeName>
        <fullName>Sporulation-specific protein 72</fullName>
    </alternativeName>
</protein>
<comment type="function">
    <text evidence="4 5 6 7 9 10 11 12 14 15 17 19 20 24 25 26 28">Lipid transfer protein required for autophagosome completion and peroxisome degradation (PubMed:10029994, PubMed:11382760, PubMed:11382761, PubMed:11675007, PubMed:18586673, PubMed:18625846, PubMed:19371383, PubMed:19995911, PubMed:22728243, PubMed:23230146, PubMed:8224160). Tethers the edge of the isolation membrane (IM) to the endoplasmic reticulum (ER) and mediates direct lipid transfer from ER to IM for IM expansion (PubMed:28704456, PubMed:29848619, PubMed:30254161). ATG2 binds to the ER exit site (ERES), which is the membrane source for autophagosome formation, using basic residues in its N-terminal region (NR) and to the expanding edge of the IM through its C-terminal region (PubMed:30254161). The latter binding is assisted by an ATG18-PtdIns3P interaction (PubMed:30254161). ATG2 then extracts phospholipids from the membrane source using its NR and transfers them to ATG9 to the IM through its predicted beta-sheet-rich structure for membrane expansion (PubMed:30254161). ATG2 is also involved in the recruitment of lipids to a restricted region close to the vacuole, termed the vacuole-isolation membrane contact site (VICS), which is also essential for autophagosome formation (PubMed:28704456). Necessary for the localization of ATG18 to the preautophagosomal structure (PAS) and the binding of ATG18 to ATG9 (PubMed:14723849, PubMed:18586673, PubMed:18625846, PubMed:19371383, PubMed:23230146). ATG2 is the most downstream ATG protein in the preautophagosomal structure organization process (PubMed:17295840). Involved in correct ATG9 trafficking through the preautophagosomal structure and in peroxisome degradation (PubMed:14723849). Plays a significant role in life span extension (PubMed:23337777).</text>
</comment>
<comment type="catalytic activity">
    <reaction evidence="1">
        <text>a 1,2-diacyl-sn-glycero-3-phosphocholine(in) = a 1,2-diacyl-sn-glycero-3-phosphocholine(out)</text>
        <dbReference type="Rhea" id="RHEA:38571"/>
        <dbReference type="ChEBI" id="CHEBI:57643"/>
    </reaction>
</comment>
<comment type="catalytic activity">
    <reaction evidence="1">
        <text>a 1,2-diacyl-sn-glycero-3-phospho-L-serine(in) = a 1,2-diacyl-sn-glycero-3-phospho-L-serine(out)</text>
        <dbReference type="Rhea" id="RHEA:38663"/>
        <dbReference type="ChEBI" id="CHEBI:57262"/>
    </reaction>
</comment>
<comment type="catalytic activity">
    <reaction evidence="1">
        <text>a 1,2-diacyl-sn-glycero-3-phosphoethanolamine(in) = a 1,2-diacyl-sn-glycero-3-phosphoethanolamine(out)</text>
        <dbReference type="Rhea" id="RHEA:38895"/>
        <dbReference type="ChEBI" id="CHEBI:64612"/>
    </reaction>
</comment>
<comment type="subunit">
    <text evidence="10 11 18 19 25 26 27">Interacts with ATG18 (PubMed:17295840, PubMed:18586673, PubMed:22851171, PubMed:23230146, PubMed:30254161, PubMed:32809042). Interacts with ATG9 (PubMed:29848619).</text>
</comment>
<comment type="interaction">
    <interactant intactId="EBI-29212">
        <id>P53855</id>
    </interactant>
    <interactant intactId="EBI-22968">
        <id>P43601</id>
        <label>ATG18</label>
    </interactant>
    <organismsDiffer>false</organismsDiffer>
    <experiments>6</experiments>
</comment>
<comment type="subcellular location">
    <subcellularLocation>
        <location evidence="6 9 10 11 13 16 17">Preautophagosomal structure membrane</location>
        <topology evidence="6 9 10 11 13 16 17 26">Peripheral membrane protein</topology>
    </subcellularLocation>
    <subcellularLocation>
        <location evidence="21 22">Endoplasmic reticulum membrane</location>
        <topology evidence="21 22">Peripheral membrane protein</topology>
    </subcellularLocation>
    <text evidence="21 22">Localizes to the IM-ERES contact site.</text>
</comment>
<comment type="domain">
    <text evidence="26">The N-terminal region (NR) associates with the endoplasmic reticulum (ER) and is responsible for the formation of the isolation membrane at the PAS.</text>
</comment>
<comment type="domain">
    <text evidence="26">The amphipathic helix in the C-terminal region binds to membranes and facilitates ATG18 binding to PtdIns3P to target the ATG2-ATG18 complex to the PAS.</text>
</comment>
<comment type="disruption phenotype">
    <text evidence="24">Impairs the formation of autophagosomes (PubMed:28704456). Completely blocks the movement of the ER-staining dye R18 from the ER to IM precursors (PubMed:28704456).</text>
</comment>
<comment type="miscellaneous">
    <text evidence="8">Present with 876 molecules/cell in log phase SD medium.</text>
</comment>
<comment type="similarity">
    <text evidence="29">Belongs to the ATG2 family.</text>
</comment>
<name>ATG2_YEAST</name>
<feature type="chain" id="PRO_0000215836" description="Autophagy-related protein 2">
    <location>
        <begin position="1"/>
        <end position="1592"/>
    </location>
</feature>
<feature type="region of interest" description="ER-targeting domain" evidence="30">
    <location>
        <begin position="2"/>
        <end position="21"/>
    </location>
</feature>
<feature type="region of interest" description="Disordered" evidence="3">
    <location>
        <begin position="264"/>
        <end position="286"/>
    </location>
</feature>
<feature type="region of interest" description="PAS-targeting domain" evidence="30">
    <location>
        <begin position="1347"/>
        <end position="1373"/>
    </location>
</feature>
<feature type="coiled-coil region" evidence="2">
    <location>
        <begin position="1049"/>
        <end position="1075"/>
    </location>
</feature>
<feature type="modified residue" description="Phosphoserine" evidence="31">
    <location>
        <position position="236"/>
    </location>
</feature>
<feature type="modified residue" description="Phosphoserine; by ATG1" evidence="23">
    <location>
        <position position="249"/>
    </location>
</feature>
<feature type="modified residue" description="Phosphoserine; by ATG1" evidence="23">
    <location>
        <position position="1086"/>
    </location>
</feature>
<feature type="mutagenesis site" description="Leads to a severely reduced activity of autophagy and a dispersed localization in the cytoplasm." evidence="6">
    <original>G</original>
    <variation>E</variation>
    <location>
        <position position="83"/>
    </location>
</feature>
<feature type="mutagenesis site" description="Does not affect autophagy; when associated with A-1086." evidence="23">
    <original>S</original>
    <variation>A</variation>
    <location>
        <position position="249"/>
    </location>
</feature>
<feature type="mutagenesis site" description="Phospho-mimetic mutant; does not affect autophagy; when associated with D-1086." evidence="23">
    <original>S</original>
    <variation>D</variation>
    <location>
        <position position="249"/>
    </location>
</feature>
<feature type="mutagenesis site" description="Does not affect autophagy; when associated with A-249." evidence="23">
    <original>S</original>
    <variation>A</variation>
    <location>
        <position position="1086"/>
    </location>
</feature>
<feature type="mutagenesis site" description="Phospho-mimetic mutant; does not affect autophagy; when associated with D-249." evidence="23">
    <original>S</original>
    <variation>D</variation>
    <location>
        <position position="1086"/>
    </location>
</feature>
<feature type="mutagenesis site" description="Does not affect autophagy." evidence="26">
    <original>FMAI</original>
    <variation>WMAW</variation>
    <location>
        <begin position="1352"/>
        <end position="1355"/>
    </location>
</feature>
<feature type="mutagenesis site" description="Impaired autophagy." evidence="26">
    <location>
        <begin position="1352"/>
        <end position="1355"/>
    </location>
</feature>